<gene>
    <name type="ordered locus">Os08g0536000</name>
    <name type="ordered locus">LOC_Os08g42410</name>
    <name type="ORF">OsJ_28086</name>
    <name type="ORF">OSJNBa0033D24.29</name>
    <name type="ORF">P0665C04.10</name>
</gene>
<keyword id="KW-0479">Metal-binding</keyword>
<keyword id="KW-0496">Mitochondrion</keyword>
<keyword id="KW-0560">Oxidoreductase</keyword>
<keyword id="KW-0630">Potassium</keyword>
<keyword id="KW-0670">Pyruvate</keyword>
<keyword id="KW-1185">Reference proteome</keyword>
<keyword id="KW-0786">Thiamine pyrophosphate</keyword>
<keyword id="KW-0809">Transit peptide</keyword>
<organism>
    <name type="scientific">Oryza sativa subsp. japonica</name>
    <name type="common">Rice</name>
    <dbReference type="NCBI Taxonomy" id="39947"/>
    <lineage>
        <taxon>Eukaryota</taxon>
        <taxon>Viridiplantae</taxon>
        <taxon>Streptophyta</taxon>
        <taxon>Embryophyta</taxon>
        <taxon>Tracheophyta</taxon>
        <taxon>Spermatophyta</taxon>
        <taxon>Magnoliopsida</taxon>
        <taxon>Liliopsida</taxon>
        <taxon>Poales</taxon>
        <taxon>Poaceae</taxon>
        <taxon>BOP clade</taxon>
        <taxon>Oryzoideae</taxon>
        <taxon>Oryzeae</taxon>
        <taxon>Oryzinae</taxon>
        <taxon>Oryza</taxon>
        <taxon>Oryza sativa</taxon>
    </lineage>
</organism>
<comment type="function">
    <text evidence="1">The pyruvate dehydrogenase complex catalyzes the overall conversion of pyruvate to acetyl-CoA and CO(2). It contains multiple copies of three enzymatic components: pyruvate dehydrogenase (E1), dihydrolipoamide acetyltransferase (E2) and lipoamide dehydrogenase (E3) (By similarity).</text>
</comment>
<comment type="catalytic activity">
    <reaction>
        <text>N(6)-[(R)-lipoyl]-L-lysyl-[protein] + pyruvate + H(+) = N(6)-[(R)-S(8)-acetyldihydrolipoyl]-L-lysyl-[protein] + CO2</text>
        <dbReference type="Rhea" id="RHEA:19189"/>
        <dbReference type="Rhea" id="RHEA-COMP:10474"/>
        <dbReference type="Rhea" id="RHEA-COMP:10478"/>
        <dbReference type="ChEBI" id="CHEBI:15361"/>
        <dbReference type="ChEBI" id="CHEBI:15378"/>
        <dbReference type="ChEBI" id="CHEBI:16526"/>
        <dbReference type="ChEBI" id="CHEBI:83099"/>
        <dbReference type="ChEBI" id="CHEBI:83111"/>
        <dbReference type="EC" id="1.2.4.1"/>
    </reaction>
</comment>
<comment type="cofactor">
    <cofactor evidence="2">
        <name>thiamine diphosphate</name>
        <dbReference type="ChEBI" id="CHEBI:58937"/>
    </cofactor>
</comment>
<comment type="subunit">
    <text evidence="1">Tetramer of 2 alpha and 2 beta subunits.</text>
</comment>
<comment type="subcellular location">
    <subcellularLocation>
        <location evidence="1">Mitochondrion matrix</location>
    </subcellularLocation>
</comment>
<name>ODPB1_ORYSJ</name>
<feature type="transit peptide" description="Mitochondrion" evidence="3">
    <location>
        <begin position="1"/>
        <end position="34"/>
    </location>
</feature>
<feature type="chain" id="PRO_0000421373" description="Pyruvate dehydrogenase E1 component subunit beta-1, mitochondrial">
    <location>
        <begin position="35"/>
        <end position="374"/>
    </location>
</feature>
<feature type="binding site" evidence="2">
    <location>
        <position position="97"/>
    </location>
    <ligand>
        <name>thiamine diphosphate</name>
        <dbReference type="ChEBI" id="CHEBI:58937"/>
        <note>ligand shared with alpha subunit</note>
    </ligand>
</feature>
<feature type="binding site" evidence="2">
    <location>
        <position position="150"/>
    </location>
    <ligand>
        <name>K(+)</name>
        <dbReference type="ChEBI" id="CHEBI:29103"/>
        <note>structural</note>
    </ligand>
</feature>
<feature type="binding site" evidence="2">
    <location>
        <position position="198"/>
    </location>
    <ligand>
        <name>K(+)</name>
        <dbReference type="ChEBI" id="CHEBI:29103"/>
        <note>structural</note>
    </ligand>
</feature>
<feature type="binding site" evidence="2">
    <location>
        <position position="199"/>
    </location>
    <ligand>
        <name>K(+)</name>
        <dbReference type="ChEBI" id="CHEBI:29103"/>
        <note>structural</note>
    </ligand>
</feature>
<feature type="binding site" evidence="2">
    <location>
        <position position="201"/>
    </location>
    <ligand>
        <name>K(+)</name>
        <dbReference type="ChEBI" id="CHEBI:29103"/>
        <note>structural</note>
    </ligand>
</feature>
<accession>Q6Z1G7</accession>
<accession>A0A0N7KQ76</accession>
<evidence type="ECO:0000250" key="1"/>
<evidence type="ECO:0000250" key="2">
    <source>
        <dbReference type="UniProtKB" id="P11177"/>
    </source>
</evidence>
<evidence type="ECO:0000255" key="3"/>
<proteinExistence type="evidence at transcript level"/>
<protein>
    <recommendedName>
        <fullName>Pyruvate dehydrogenase E1 component subunit beta-1, mitochondrial</fullName>
        <shortName>PDHE1-B</shortName>
        <ecNumber>1.2.4.1</ecNumber>
    </recommendedName>
</protein>
<reference key="1">
    <citation type="journal article" date="2005" name="Nature">
        <title>The map-based sequence of the rice genome.</title>
        <authorList>
            <consortium name="International rice genome sequencing project (IRGSP)"/>
        </authorList>
    </citation>
    <scope>NUCLEOTIDE SEQUENCE [LARGE SCALE GENOMIC DNA]</scope>
    <source>
        <strain>cv. Nipponbare</strain>
    </source>
</reference>
<reference key="2">
    <citation type="journal article" date="2008" name="Nucleic Acids Res.">
        <title>The rice annotation project database (RAP-DB): 2008 update.</title>
        <authorList>
            <consortium name="The rice annotation project (RAP)"/>
        </authorList>
    </citation>
    <scope>GENOME REANNOTATION</scope>
    <source>
        <strain>cv. Nipponbare</strain>
    </source>
</reference>
<reference key="3">
    <citation type="journal article" date="2013" name="Rice">
        <title>Improvement of the Oryza sativa Nipponbare reference genome using next generation sequence and optical map data.</title>
        <authorList>
            <person name="Kawahara Y."/>
            <person name="de la Bastide M."/>
            <person name="Hamilton J.P."/>
            <person name="Kanamori H."/>
            <person name="McCombie W.R."/>
            <person name="Ouyang S."/>
            <person name="Schwartz D.C."/>
            <person name="Tanaka T."/>
            <person name="Wu J."/>
            <person name="Zhou S."/>
            <person name="Childs K.L."/>
            <person name="Davidson R.M."/>
            <person name="Lin H."/>
            <person name="Quesada-Ocampo L."/>
            <person name="Vaillancourt B."/>
            <person name="Sakai H."/>
            <person name="Lee S.S."/>
            <person name="Kim J."/>
            <person name="Numa H."/>
            <person name="Itoh T."/>
            <person name="Buell C.R."/>
            <person name="Matsumoto T."/>
        </authorList>
    </citation>
    <scope>GENOME REANNOTATION</scope>
    <source>
        <strain>cv. Nipponbare</strain>
    </source>
</reference>
<reference key="4">
    <citation type="journal article" date="2005" name="PLoS Biol.">
        <title>The genomes of Oryza sativa: a history of duplications.</title>
        <authorList>
            <person name="Yu J."/>
            <person name="Wang J."/>
            <person name="Lin W."/>
            <person name="Li S."/>
            <person name="Li H."/>
            <person name="Zhou J."/>
            <person name="Ni P."/>
            <person name="Dong W."/>
            <person name="Hu S."/>
            <person name="Zeng C."/>
            <person name="Zhang J."/>
            <person name="Zhang Y."/>
            <person name="Li R."/>
            <person name="Xu Z."/>
            <person name="Li S."/>
            <person name="Li X."/>
            <person name="Zheng H."/>
            <person name="Cong L."/>
            <person name="Lin L."/>
            <person name="Yin J."/>
            <person name="Geng J."/>
            <person name="Li G."/>
            <person name="Shi J."/>
            <person name="Liu J."/>
            <person name="Lv H."/>
            <person name="Li J."/>
            <person name="Wang J."/>
            <person name="Deng Y."/>
            <person name="Ran L."/>
            <person name="Shi X."/>
            <person name="Wang X."/>
            <person name="Wu Q."/>
            <person name="Li C."/>
            <person name="Ren X."/>
            <person name="Wang J."/>
            <person name="Wang X."/>
            <person name="Li D."/>
            <person name="Liu D."/>
            <person name="Zhang X."/>
            <person name="Ji Z."/>
            <person name="Zhao W."/>
            <person name="Sun Y."/>
            <person name="Zhang Z."/>
            <person name="Bao J."/>
            <person name="Han Y."/>
            <person name="Dong L."/>
            <person name="Ji J."/>
            <person name="Chen P."/>
            <person name="Wu S."/>
            <person name="Liu J."/>
            <person name="Xiao Y."/>
            <person name="Bu D."/>
            <person name="Tan J."/>
            <person name="Yang L."/>
            <person name="Ye C."/>
            <person name="Zhang J."/>
            <person name="Xu J."/>
            <person name="Zhou Y."/>
            <person name="Yu Y."/>
            <person name="Zhang B."/>
            <person name="Zhuang S."/>
            <person name="Wei H."/>
            <person name="Liu B."/>
            <person name="Lei M."/>
            <person name="Yu H."/>
            <person name="Li Y."/>
            <person name="Xu H."/>
            <person name="Wei S."/>
            <person name="He X."/>
            <person name="Fang L."/>
            <person name="Zhang Z."/>
            <person name="Zhang Y."/>
            <person name="Huang X."/>
            <person name="Su Z."/>
            <person name="Tong W."/>
            <person name="Li J."/>
            <person name="Tong Z."/>
            <person name="Li S."/>
            <person name="Ye J."/>
            <person name="Wang L."/>
            <person name="Fang L."/>
            <person name="Lei T."/>
            <person name="Chen C.-S."/>
            <person name="Chen H.-C."/>
            <person name="Xu Z."/>
            <person name="Li H."/>
            <person name="Huang H."/>
            <person name="Zhang F."/>
            <person name="Xu H."/>
            <person name="Li N."/>
            <person name="Zhao C."/>
            <person name="Li S."/>
            <person name="Dong L."/>
            <person name="Huang Y."/>
            <person name="Li L."/>
            <person name="Xi Y."/>
            <person name="Qi Q."/>
            <person name="Li W."/>
            <person name="Zhang B."/>
            <person name="Hu W."/>
            <person name="Zhang Y."/>
            <person name="Tian X."/>
            <person name="Jiao Y."/>
            <person name="Liang X."/>
            <person name="Jin J."/>
            <person name="Gao L."/>
            <person name="Zheng W."/>
            <person name="Hao B."/>
            <person name="Liu S.-M."/>
            <person name="Wang W."/>
            <person name="Yuan L."/>
            <person name="Cao M."/>
            <person name="McDermott J."/>
            <person name="Samudrala R."/>
            <person name="Wang J."/>
            <person name="Wong G.K.-S."/>
            <person name="Yang H."/>
        </authorList>
    </citation>
    <scope>NUCLEOTIDE SEQUENCE [LARGE SCALE GENOMIC DNA]</scope>
    <source>
        <strain>cv. Nipponbare</strain>
    </source>
</reference>
<reference key="5">
    <citation type="journal article" date="2003" name="Science">
        <title>Collection, mapping, and annotation of over 28,000 cDNA clones from japonica rice.</title>
        <authorList>
            <consortium name="The rice full-length cDNA consortium"/>
        </authorList>
    </citation>
    <scope>NUCLEOTIDE SEQUENCE [LARGE SCALE MRNA]</scope>
    <source>
        <strain>cv. Nipponbare</strain>
    </source>
</reference>
<sequence>MLGIARRRLGSGCALGQLMQALRPAAAAAAARTYSAAAKEMTVREALNSALDEEMSADPSVFLMGEEVGEYQGAYKISKGLLDKYGPDRVLDTPITEAGFTGIGVGAAYQGLRPVVEFMTFNFSMQAIDHIINSAAKSNYMSAGQINVPIVFRGPNGAAAGVGAQHSQCYAAWYAHVPGLKVLTPYSAEDARGLLKAAIRDPDPVVFLENELLYGESFPVSAEVLDSSFCLPIGKAKIEQEGKDVTITAFSKMVGYALQAAEILSKEGISAEVINLRSIRPLDRATINASVRKTNRLVTLEEGFPQHGVGAEICMSVVEDSFEYLDAPVERIAGADVPMPYAANLERMAVPQVEDIVRAAKRACYRAVPMAATA</sequence>
<dbReference type="EC" id="1.2.4.1"/>
<dbReference type="EMBL" id="AP004464">
    <property type="protein sequence ID" value="BAD01226.1"/>
    <property type="molecule type" value="Genomic_DNA"/>
</dbReference>
<dbReference type="EMBL" id="AP005439">
    <property type="protein sequence ID" value="BAD13111.1"/>
    <property type="molecule type" value="Genomic_DNA"/>
</dbReference>
<dbReference type="EMBL" id="AP008214">
    <property type="protein sequence ID" value="BAF24274.1"/>
    <property type="molecule type" value="Genomic_DNA"/>
</dbReference>
<dbReference type="EMBL" id="AP014964">
    <property type="protein sequence ID" value="BAT06442.1"/>
    <property type="molecule type" value="Genomic_DNA"/>
</dbReference>
<dbReference type="EMBL" id="CM000145">
    <property type="protein sequence ID" value="EEE69070.1"/>
    <property type="molecule type" value="Genomic_DNA"/>
</dbReference>
<dbReference type="EMBL" id="AK104686">
    <property type="protein sequence ID" value="BAG96883.1"/>
    <property type="molecule type" value="mRNA"/>
</dbReference>
<dbReference type="RefSeq" id="XP_015650909.1">
    <property type="nucleotide sequence ID" value="XM_015795423.1"/>
</dbReference>
<dbReference type="SMR" id="Q6Z1G7"/>
<dbReference type="FunCoup" id="Q6Z1G7">
    <property type="interactions" value="2861"/>
</dbReference>
<dbReference type="STRING" id="39947.Q6Z1G7"/>
<dbReference type="PaxDb" id="39947-Q6Z1G7"/>
<dbReference type="EnsemblPlants" id="Os08t0536000-01">
    <property type="protein sequence ID" value="Os08t0536000-01"/>
    <property type="gene ID" value="Os08g0536000"/>
</dbReference>
<dbReference type="Gramene" id="Os08t0536000-01">
    <property type="protein sequence ID" value="Os08t0536000-01"/>
    <property type="gene ID" value="Os08g0536000"/>
</dbReference>
<dbReference type="KEGG" id="dosa:Os08g0536000"/>
<dbReference type="eggNOG" id="KOG0524">
    <property type="taxonomic scope" value="Eukaryota"/>
</dbReference>
<dbReference type="HOGENOM" id="CLU_012907_1_1_1"/>
<dbReference type="InParanoid" id="Q6Z1G7"/>
<dbReference type="OMA" id="WYANCPG"/>
<dbReference type="OrthoDB" id="10266385at2759"/>
<dbReference type="Proteomes" id="UP000000763">
    <property type="component" value="Chromosome 8"/>
</dbReference>
<dbReference type="Proteomes" id="UP000007752">
    <property type="component" value="Chromosome 8"/>
</dbReference>
<dbReference type="Proteomes" id="UP000059680">
    <property type="component" value="Chromosome 8"/>
</dbReference>
<dbReference type="GO" id="GO:0005759">
    <property type="term" value="C:mitochondrial matrix"/>
    <property type="evidence" value="ECO:0007669"/>
    <property type="project" value="UniProtKB-SubCell"/>
</dbReference>
<dbReference type="GO" id="GO:0045254">
    <property type="term" value="C:pyruvate dehydrogenase complex"/>
    <property type="evidence" value="ECO:0000318"/>
    <property type="project" value="GO_Central"/>
</dbReference>
<dbReference type="GO" id="GO:0046872">
    <property type="term" value="F:metal ion binding"/>
    <property type="evidence" value="ECO:0007669"/>
    <property type="project" value="UniProtKB-KW"/>
</dbReference>
<dbReference type="GO" id="GO:0004739">
    <property type="term" value="F:pyruvate dehydrogenase (acetyl-transferring) activity"/>
    <property type="evidence" value="ECO:0000318"/>
    <property type="project" value="GO_Central"/>
</dbReference>
<dbReference type="GO" id="GO:0006086">
    <property type="term" value="P:pyruvate decarboxylation to acetyl-CoA"/>
    <property type="evidence" value="ECO:0000318"/>
    <property type="project" value="GO_Central"/>
</dbReference>
<dbReference type="CDD" id="cd07036">
    <property type="entry name" value="TPP_PYR_E1-PDHc-beta_like"/>
    <property type="match status" value="1"/>
</dbReference>
<dbReference type="FunFam" id="3.40.50.920:FF:000001">
    <property type="entry name" value="Pyruvate dehydrogenase E1 beta subunit"/>
    <property type="match status" value="1"/>
</dbReference>
<dbReference type="FunFam" id="3.40.50.970:FF:000006">
    <property type="entry name" value="Pyruvate dehydrogenase E1 component subunit beta"/>
    <property type="match status" value="1"/>
</dbReference>
<dbReference type="Gene3D" id="3.40.50.920">
    <property type="match status" value="1"/>
</dbReference>
<dbReference type="Gene3D" id="3.40.50.970">
    <property type="match status" value="1"/>
</dbReference>
<dbReference type="InterPro" id="IPR027110">
    <property type="entry name" value="PDHB_mito-type"/>
</dbReference>
<dbReference type="InterPro" id="IPR029061">
    <property type="entry name" value="THDP-binding"/>
</dbReference>
<dbReference type="InterPro" id="IPR009014">
    <property type="entry name" value="Transketo_C/PFOR_II"/>
</dbReference>
<dbReference type="InterPro" id="IPR005475">
    <property type="entry name" value="Transketolase-like_Pyr-bd"/>
</dbReference>
<dbReference type="InterPro" id="IPR033248">
    <property type="entry name" value="Transketolase_C"/>
</dbReference>
<dbReference type="NCBIfam" id="NF006667">
    <property type="entry name" value="PRK09212.1"/>
    <property type="match status" value="1"/>
</dbReference>
<dbReference type="NCBIfam" id="NF008854">
    <property type="entry name" value="PRK11892.1"/>
    <property type="match status" value="1"/>
</dbReference>
<dbReference type="PANTHER" id="PTHR11624">
    <property type="entry name" value="DEHYDROGENASE RELATED"/>
    <property type="match status" value="1"/>
</dbReference>
<dbReference type="PANTHER" id="PTHR11624:SF96">
    <property type="entry name" value="PYRUVATE DEHYDROGENASE E1 COMPONENT SUBUNIT BETA, MITOCHONDRIAL"/>
    <property type="match status" value="1"/>
</dbReference>
<dbReference type="Pfam" id="PF02779">
    <property type="entry name" value="Transket_pyr"/>
    <property type="match status" value="1"/>
</dbReference>
<dbReference type="Pfam" id="PF02780">
    <property type="entry name" value="Transketolase_C"/>
    <property type="match status" value="1"/>
</dbReference>
<dbReference type="SMART" id="SM00861">
    <property type="entry name" value="Transket_pyr"/>
    <property type="match status" value="1"/>
</dbReference>
<dbReference type="SUPFAM" id="SSF52518">
    <property type="entry name" value="Thiamin diphosphate-binding fold (THDP-binding)"/>
    <property type="match status" value="1"/>
</dbReference>
<dbReference type="SUPFAM" id="SSF52922">
    <property type="entry name" value="TK C-terminal domain-like"/>
    <property type="match status" value="1"/>
</dbReference>